<keyword id="KW-0067">ATP-binding</keyword>
<keyword id="KW-0436">Ligase</keyword>
<keyword id="KW-0460">Magnesium</keyword>
<keyword id="KW-0479">Metal-binding</keyword>
<keyword id="KW-0520">NAD</keyword>
<keyword id="KW-0547">Nucleotide-binding</keyword>
<accession>Q6L0D1</accession>
<organism>
    <name type="scientific">Picrophilus torridus (strain ATCC 700027 / DSM 9790 / JCM 10055 / NBRC 100828 / KAW 2/3)</name>
    <dbReference type="NCBI Taxonomy" id="1122961"/>
    <lineage>
        <taxon>Archaea</taxon>
        <taxon>Methanobacteriati</taxon>
        <taxon>Thermoplasmatota</taxon>
        <taxon>Thermoplasmata</taxon>
        <taxon>Thermoplasmatales</taxon>
        <taxon>Picrophilaceae</taxon>
        <taxon>Picrophilus</taxon>
    </lineage>
</organism>
<name>NADE_PICTO</name>
<reference key="1">
    <citation type="journal article" date="2004" name="Proc. Natl. Acad. Sci. U.S.A.">
        <title>Genome sequence of Picrophilus torridus and its implications for life around pH 0.</title>
        <authorList>
            <person name="Fuetterer O."/>
            <person name="Angelov A."/>
            <person name="Liesegang H."/>
            <person name="Gottschalk G."/>
            <person name="Schleper C."/>
            <person name="Schepers B."/>
            <person name="Dock C."/>
            <person name="Antranikian G."/>
            <person name="Liebl W."/>
        </authorList>
    </citation>
    <scope>NUCLEOTIDE SEQUENCE [LARGE SCALE GENOMIC DNA]</scope>
    <source>
        <strain>ATCC 700027 / DSM 9790 / JCM 10055 / NBRC 100828 / KAW 2/3</strain>
    </source>
</reference>
<comment type="function">
    <text evidence="1">Catalyzes the ATP-dependent amidation of deamido-NAD to form NAD. Uses ammonia as a nitrogen source.</text>
</comment>
<comment type="catalytic activity">
    <reaction evidence="1">
        <text>deamido-NAD(+) + NH4(+) + ATP = AMP + diphosphate + NAD(+) + H(+)</text>
        <dbReference type="Rhea" id="RHEA:21188"/>
        <dbReference type="ChEBI" id="CHEBI:15378"/>
        <dbReference type="ChEBI" id="CHEBI:28938"/>
        <dbReference type="ChEBI" id="CHEBI:30616"/>
        <dbReference type="ChEBI" id="CHEBI:33019"/>
        <dbReference type="ChEBI" id="CHEBI:57540"/>
        <dbReference type="ChEBI" id="CHEBI:58437"/>
        <dbReference type="ChEBI" id="CHEBI:456215"/>
        <dbReference type="EC" id="6.3.1.5"/>
    </reaction>
</comment>
<comment type="pathway">
    <text evidence="1">Cofactor biosynthesis; NAD(+) biosynthesis; NAD(+) from deamido-NAD(+) (ammonia route): step 1/1.</text>
</comment>
<comment type="subunit">
    <text evidence="1">Homodimer.</text>
</comment>
<comment type="similarity">
    <text evidence="1">Belongs to the NAD synthetase family.</text>
</comment>
<evidence type="ECO:0000255" key="1">
    <source>
        <dbReference type="HAMAP-Rule" id="MF_00193"/>
    </source>
</evidence>
<gene>
    <name evidence="1" type="primary">nadE</name>
    <name type="ordered locus">PTO0986</name>
</gene>
<protein>
    <recommendedName>
        <fullName evidence="1">NH(3)-dependent NAD(+) synthetase</fullName>
        <ecNumber evidence="1">6.3.1.5</ecNumber>
    </recommendedName>
</protein>
<proteinExistence type="inferred from homology"/>
<feature type="chain" id="PRO_0000152228" description="NH(3)-dependent NAD(+) synthetase">
    <location>
        <begin position="1"/>
        <end position="249"/>
    </location>
</feature>
<feature type="binding site" evidence="1">
    <location>
        <position position="34"/>
    </location>
    <ligand>
        <name>Mg(2+)</name>
        <dbReference type="ChEBI" id="CHEBI:18420"/>
    </ligand>
</feature>
<feature type="binding site" evidence="1">
    <location>
        <position position="110"/>
    </location>
    <ligand>
        <name>deamido-NAD(+)</name>
        <dbReference type="ChEBI" id="CHEBI:58437"/>
    </ligand>
</feature>
<feature type="binding site" evidence="1">
    <location>
        <position position="130"/>
    </location>
    <ligand>
        <name>ATP</name>
        <dbReference type="ChEBI" id="CHEBI:30616"/>
    </ligand>
</feature>
<feature type="binding site" evidence="1">
    <location>
        <position position="135"/>
    </location>
    <ligand>
        <name>Mg(2+)</name>
        <dbReference type="ChEBI" id="CHEBI:18420"/>
    </ligand>
</feature>
<feature type="binding site" evidence="1">
    <location>
        <position position="143"/>
    </location>
    <ligand>
        <name>deamido-NAD(+)</name>
        <dbReference type="ChEBI" id="CHEBI:58437"/>
    </ligand>
</feature>
<feature type="binding site" evidence="1">
    <location>
        <position position="150"/>
    </location>
    <ligand>
        <name>deamido-NAD(+)</name>
        <dbReference type="ChEBI" id="CHEBI:58437"/>
    </ligand>
</feature>
<feature type="binding site" evidence="1">
    <location>
        <position position="159"/>
    </location>
    <ligand>
        <name>ATP</name>
        <dbReference type="ChEBI" id="CHEBI:30616"/>
    </ligand>
</feature>
<feature type="binding site" evidence="1">
    <location>
        <position position="181"/>
    </location>
    <ligand>
        <name>ATP</name>
        <dbReference type="ChEBI" id="CHEBI:30616"/>
    </ligand>
</feature>
<feature type="binding site" evidence="1">
    <location>
        <begin position="232"/>
        <end position="233"/>
    </location>
    <ligand>
        <name>deamido-NAD(+)</name>
        <dbReference type="ChEBI" id="CHEBI:58437"/>
    </ligand>
</feature>
<dbReference type="EC" id="6.3.1.5" evidence="1"/>
<dbReference type="EMBL" id="AE017261">
    <property type="protein sequence ID" value="AAT43571.1"/>
    <property type="molecule type" value="Genomic_DNA"/>
</dbReference>
<dbReference type="RefSeq" id="WP_011177787.1">
    <property type="nucleotide sequence ID" value="NC_005877.1"/>
</dbReference>
<dbReference type="SMR" id="Q6L0D1"/>
<dbReference type="FunCoup" id="Q6L0D1">
    <property type="interactions" value="61"/>
</dbReference>
<dbReference type="STRING" id="263820.PTO0986"/>
<dbReference type="PaxDb" id="263820-PTO0986"/>
<dbReference type="GeneID" id="2844813"/>
<dbReference type="KEGG" id="pto:PTO0986"/>
<dbReference type="PATRIC" id="fig|263820.9.peg.1025"/>
<dbReference type="eggNOG" id="arCOG00069">
    <property type="taxonomic scope" value="Archaea"/>
</dbReference>
<dbReference type="HOGENOM" id="CLU_059327_1_1_2"/>
<dbReference type="InParanoid" id="Q6L0D1"/>
<dbReference type="OrthoDB" id="39312at2157"/>
<dbReference type="UniPathway" id="UPA00253">
    <property type="reaction ID" value="UER00333"/>
</dbReference>
<dbReference type="Proteomes" id="UP000000438">
    <property type="component" value="Chromosome"/>
</dbReference>
<dbReference type="GO" id="GO:0005737">
    <property type="term" value="C:cytoplasm"/>
    <property type="evidence" value="ECO:0007669"/>
    <property type="project" value="InterPro"/>
</dbReference>
<dbReference type="GO" id="GO:0005524">
    <property type="term" value="F:ATP binding"/>
    <property type="evidence" value="ECO:0007669"/>
    <property type="project" value="UniProtKB-UniRule"/>
</dbReference>
<dbReference type="GO" id="GO:0004359">
    <property type="term" value="F:glutaminase activity"/>
    <property type="evidence" value="ECO:0007669"/>
    <property type="project" value="InterPro"/>
</dbReference>
<dbReference type="GO" id="GO:0046872">
    <property type="term" value="F:metal ion binding"/>
    <property type="evidence" value="ECO:0007669"/>
    <property type="project" value="UniProtKB-KW"/>
</dbReference>
<dbReference type="GO" id="GO:0003952">
    <property type="term" value="F:NAD+ synthase (glutamine-hydrolyzing) activity"/>
    <property type="evidence" value="ECO:0007669"/>
    <property type="project" value="InterPro"/>
</dbReference>
<dbReference type="GO" id="GO:0008795">
    <property type="term" value="F:NAD+ synthase activity"/>
    <property type="evidence" value="ECO:0007669"/>
    <property type="project" value="UniProtKB-UniRule"/>
</dbReference>
<dbReference type="GO" id="GO:0009435">
    <property type="term" value="P:NAD biosynthetic process"/>
    <property type="evidence" value="ECO:0007669"/>
    <property type="project" value="UniProtKB-UniRule"/>
</dbReference>
<dbReference type="CDD" id="cd00553">
    <property type="entry name" value="NAD_synthase"/>
    <property type="match status" value="1"/>
</dbReference>
<dbReference type="Gene3D" id="3.40.50.620">
    <property type="entry name" value="HUPs"/>
    <property type="match status" value="1"/>
</dbReference>
<dbReference type="HAMAP" id="MF_00193">
    <property type="entry name" value="NadE_ammonia_dep"/>
    <property type="match status" value="1"/>
</dbReference>
<dbReference type="InterPro" id="IPR022310">
    <property type="entry name" value="NAD/GMP_synthase"/>
</dbReference>
<dbReference type="InterPro" id="IPR003694">
    <property type="entry name" value="NAD_synthase"/>
</dbReference>
<dbReference type="InterPro" id="IPR022926">
    <property type="entry name" value="NH(3)-dep_NAD(+)_synth"/>
</dbReference>
<dbReference type="InterPro" id="IPR014729">
    <property type="entry name" value="Rossmann-like_a/b/a_fold"/>
</dbReference>
<dbReference type="NCBIfam" id="TIGR00552">
    <property type="entry name" value="nadE"/>
    <property type="match status" value="1"/>
</dbReference>
<dbReference type="NCBIfam" id="NF010587">
    <property type="entry name" value="PRK13980.1"/>
    <property type="match status" value="1"/>
</dbReference>
<dbReference type="PANTHER" id="PTHR23090:SF9">
    <property type="entry name" value="GLUTAMINE-DEPENDENT NAD(+) SYNTHETASE"/>
    <property type="match status" value="1"/>
</dbReference>
<dbReference type="PANTHER" id="PTHR23090">
    <property type="entry name" value="NH 3 /GLUTAMINE-DEPENDENT NAD + SYNTHETASE"/>
    <property type="match status" value="1"/>
</dbReference>
<dbReference type="Pfam" id="PF02540">
    <property type="entry name" value="NAD_synthase"/>
    <property type="match status" value="1"/>
</dbReference>
<dbReference type="SUPFAM" id="SSF52402">
    <property type="entry name" value="Adenine nucleotide alpha hydrolases-like"/>
    <property type="match status" value="1"/>
</dbReference>
<sequence length="249" mass="28519">MVERLDGVFKSISDFLRQELNGKNAVIGVSSGIDSALVLTILSKAIDKDRIHAFFMPDRFTRSADFDDIRSLEGSTGVKINEINIENIVNGYKSTLGINDKKYEGNIRSRVRSVILYYNANLLNGLVVGTTNRTEYLIGYFTKYGDGACDLEPIEHLYKSDVRELASYLKVPESIIRKKPSAGLWGDQYDEDELGMGYEELDSILKDLFEKKTGILDDRYKMVYDMYIRSQHKRKLPKSMMNDDFRYNV</sequence>